<evidence type="ECO:0000255" key="1">
    <source>
        <dbReference type="HAMAP-Rule" id="MF_01302"/>
    </source>
</evidence>
<evidence type="ECO:0000305" key="2"/>
<proteinExistence type="inferred from homology"/>
<sequence length="133" mass="15096">MVFVNPLANALTSIYNNEMRRNKQAIIMPASKLVINVLRVMQKEGYVGEFEYIDDGRWGKITVQLLGRVNKCGPITPRYPLSYRQMIALPDYIRRYLPSKEIGIIIVSTSKGVMSHKEAARMRLGGVALGYVY</sequence>
<feature type="chain" id="PRO_1000214268" description="Small ribosomal subunit protein uS8">
    <location>
        <begin position="1"/>
        <end position="133"/>
    </location>
</feature>
<comment type="function">
    <text evidence="1">One of the primary rRNA binding proteins, it binds directly to 16S rRNA central domain where it helps coordinate assembly of the platform of the 30S subunit.</text>
</comment>
<comment type="subunit">
    <text evidence="1">Part of the 30S ribosomal subunit.</text>
</comment>
<comment type="similarity">
    <text evidence="1">Belongs to the universal ribosomal protein uS8 family.</text>
</comment>
<keyword id="KW-0687">Ribonucleoprotein</keyword>
<keyword id="KW-0689">Ribosomal protein</keyword>
<keyword id="KW-0694">RNA-binding</keyword>
<keyword id="KW-0699">rRNA-binding</keyword>
<dbReference type="EMBL" id="CP001399">
    <property type="protein sequence ID" value="ACP35537.1"/>
    <property type="molecule type" value="Genomic_DNA"/>
</dbReference>
<dbReference type="RefSeq" id="WP_012711433.1">
    <property type="nucleotide sequence ID" value="NC_012589.1"/>
</dbReference>
<dbReference type="SMR" id="C3MQ74"/>
<dbReference type="KEGG" id="sis:LS215_1530"/>
<dbReference type="HOGENOM" id="CLU_098428_1_1_2"/>
<dbReference type="OrthoDB" id="5670at2157"/>
<dbReference type="Proteomes" id="UP000001747">
    <property type="component" value="Chromosome"/>
</dbReference>
<dbReference type="GO" id="GO:1990904">
    <property type="term" value="C:ribonucleoprotein complex"/>
    <property type="evidence" value="ECO:0007669"/>
    <property type="project" value="UniProtKB-KW"/>
</dbReference>
<dbReference type="GO" id="GO:0005840">
    <property type="term" value="C:ribosome"/>
    <property type="evidence" value="ECO:0007669"/>
    <property type="project" value="UniProtKB-KW"/>
</dbReference>
<dbReference type="GO" id="GO:0019843">
    <property type="term" value="F:rRNA binding"/>
    <property type="evidence" value="ECO:0007669"/>
    <property type="project" value="UniProtKB-UniRule"/>
</dbReference>
<dbReference type="GO" id="GO:0003735">
    <property type="term" value="F:structural constituent of ribosome"/>
    <property type="evidence" value="ECO:0007669"/>
    <property type="project" value="InterPro"/>
</dbReference>
<dbReference type="GO" id="GO:0006412">
    <property type="term" value="P:translation"/>
    <property type="evidence" value="ECO:0007669"/>
    <property type="project" value="UniProtKB-UniRule"/>
</dbReference>
<dbReference type="FunFam" id="3.30.1370.30:FF:000001">
    <property type="entry name" value="40S ribosomal protein S15a"/>
    <property type="match status" value="1"/>
</dbReference>
<dbReference type="Gene3D" id="3.30.1370.30">
    <property type="match status" value="1"/>
</dbReference>
<dbReference type="Gene3D" id="3.30.1490.10">
    <property type="match status" value="1"/>
</dbReference>
<dbReference type="HAMAP" id="MF_01302_A">
    <property type="entry name" value="Ribosomal_uS8_A"/>
    <property type="match status" value="1"/>
</dbReference>
<dbReference type="InterPro" id="IPR000630">
    <property type="entry name" value="Ribosomal_uS8"/>
</dbReference>
<dbReference type="InterPro" id="IPR047863">
    <property type="entry name" value="Ribosomal_uS8_CS"/>
</dbReference>
<dbReference type="InterPro" id="IPR035987">
    <property type="entry name" value="Ribosomal_uS8_sf"/>
</dbReference>
<dbReference type="NCBIfam" id="NF003115">
    <property type="entry name" value="PRK04034.1"/>
    <property type="match status" value="1"/>
</dbReference>
<dbReference type="PANTHER" id="PTHR11758">
    <property type="entry name" value="40S RIBOSOMAL PROTEIN S15A"/>
    <property type="match status" value="1"/>
</dbReference>
<dbReference type="Pfam" id="PF00410">
    <property type="entry name" value="Ribosomal_S8"/>
    <property type="match status" value="1"/>
</dbReference>
<dbReference type="SUPFAM" id="SSF56047">
    <property type="entry name" value="Ribosomal protein S8"/>
    <property type="match status" value="1"/>
</dbReference>
<dbReference type="PROSITE" id="PS00053">
    <property type="entry name" value="RIBOSOMAL_S8"/>
    <property type="match status" value="1"/>
</dbReference>
<protein>
    <recommendedName>
        <fullName evidence="1">Small ribosomal subunit protein uS8</fullName>
    </recommendedName>
    <alternativeName>
        <fullName evidence="2">30S ribosomal protein S8</fullName>
    </alternativeName>
</protein>
<accession>C3MQ74</accession>
<organism>
    <name type="scientific">Saccharolobus islandicus (strain L.S.2.15 / Lassen #1)</name>
    <name type="common">Sulfolobus islandicus</name>
    <dbReference type="NCBI Taxonomy" id="429572"/>
    <lineage>
        <taxon>Archaea</taxon>
        <taxon>Thermoproteota</taxon>
        <taxon>Thermoprotei</taxon>
        <taxon>Sulfolobales</taxon>
        <taxon>Sulfolobaceae</taxon>
        <taxon>Saccharolobus</taxon>
    </lineage>
</organism>
<name>RS8_SACI2</name>
<reference key="1">
    <citation type="journal article" date="2009" name="Proc. Natl. Acad. Sci. U.S.A.">
        <title>Biogeography of the Sulfolobus islandicus pan-genome.</title>
        <authorList>
            <person name="Reno M.L."/>
            <person name="Held N.L."/>
            <person name="Fields C.J."/>
            <person name="Burke P.V."/>
            <person name="Whitaker R.J."/>
        </authorList>
    </citation>
    <scope>NUCLEOTIDE SEQUENCE [LARGE SCALE GENOMIC DNA]</scope>
    <source>
        <strain>L.S.2.15 / Lassen #1</strain>
    </source>
</reference>
<gene>
    <name evidence="1" type="primary">rps8</name>
    <name type="ordered locus">LS215_1530</name>
</gene>